<comment type="subunit">
    <text>Myosin is a hexamer of 2 heavy chains and 4 light chains.</text>
</comment>
<comment type="interaction">
    <interactant intactId="EBI-10222416">
        <id>Q01449</id>
    </interactant>
    <interactant intactId="EBI-11987923">
        <id>P59942</id>
        <label>MCCD1</label>
    </interactant>
    <organismsDiffer>false</organismsDiffer>
    <experiments>3</experiments>
</comment>
<comment type="interaction">
    <interactant intactId="EBI-10222416">
        <id>Q01449</id>
    </interactant>
    <interactant intactId="EBI-16439278">
        <id>Q6FHY5</id>
        <label>MEOX2</label>
    </interactant>
    <organismsDiffer>false</organismsDiffer>
    <experiments>3</experiments>
</comment>
<comment type="interaction">
    <interactant intactId="EBI-10222416">
        <id>Q01449</id>
    </interactant>
    <interactant intactId="EBI-12029004">
        <id>P78424</id>
        <label>POU6F2</label>
    </interactant>
    <organismsDiffer>false</organismsDiffer>
    <experiments>3</experiments>
</comment>
<comment type="interaction">
    <interactant intactId="EBI-10222416">
        <id>Q01449</id>
    </interactant>
    <interactant intactId="EBI-17715099">
        <id>O75688-3</id>
        <label>PPM1B</label>
    </interactant>
    <organismsDiffer>false</organismsDiffer>
    <experiments>3</experiments>
</comment>
<comment type="interaction">
    <interactant intactId="EBI-10222416">
        <id>Q01449</id>
    </interactant>
    <interactant intactId="EBI-11974061">
        <id>Q9UIG4</id>
        <label>PSORS1C2</label>
    </interactant>
    <organismsDiffer>false</organismsDiffer>
    <experiments>3</experiments>
</comment>
<comment type="interaction">
    <interactant intactId="EBI-10222416">
        <id>Q01449</id>
    </interactant>
    <interactant intactId="EBI-3921347">
        <id>P51687</id>
        <label>SUOX</label>
    </interactant>
    <organismsDiffer>false</organismsDiffer>
    <experiments>3</experiments>
</comment>
<comment type="interaction">
    <interactant intactId="EBI-10222416">
        <id>Q01449</id>
    </interactant>
    <interactant intactId="EBI-948613">
        <id>O94842</id>
        <label>TOX4</label>
    </interactant>
    <organismsDiffer>false</organismsDiffer>
    <experiments>3</experiments>
</comment>
<comment type="tissue specificity">
    <text evidence="4">Predominantly expressed in adult atrial muscle.</text>
</comment>
<comment type="miscellaneous">
    <text>This chain binds calcium.</text>
</comment>
<evidence type="ECO:0000250" key="1">
    <source>
        <dbReference type="UniProtKB" id="F1SSF9"/>
    </source>
</evidence>
<evidence type="ECO:0000250" key="2">
    <source>
        <dbReference type="UniProtKB" id="Q9QVP4"/>
    </source>
</evidence>
<evidence type="ECO:0000255" key="3">
    <source>
        <dbReference type="PROSITE-ProRule" id="PRU00448"/>
    </source>
</evidence>
<evidence type="ECO:0000269" key="4">
    <source>
    </source>
</evidence>
<accession>Q01449</accession>
<accession>B2R4L3</accession>
<gene>
    <name type="primary">MYL7</name>
    <name type="synonym">MYL2A</name>
    <name type="synonym">MYLC2A</name>
</gene>
<reference key="1">
    <citation type="journal article" date="1992" name="J. Biol. Chem.">
        <title>Differential regulation of the atrial isoforms of the myosin light chains during striated muscle development.</title>
        <authorList>
            <person name="Hailstones D.L."/>
            <person name="Barton P."/>
            <person name="Chan-Thomas P."/>
            <person name="Sutherland C.J."/>
            <person name="Hardeman E.C."/>
            <person name="Gunning P.W."/>
        </authorList>
    </citation>
    <scope>NUCLEOTIDE SEQUENCE [MRNA]</scope>
    <scope>TISSUE SPECIFICITY</scope>
</reference>
<reference key="2">
    <citation type="journal article" date="2004" name="Nat. Genet.">
        <title>Complete sequencing and characterization of 21,243 full-length human cDNAs.</title>
        <authorList>
            <person name="Ota T."/>
            <person name="Suzuki Y."/>
            <person name="Nishikawa T."/>
            <person name="Otsuki T."/>
            <person name="Sugiyama T."/>
            <person name="Irie R."/>
            <person name="Wakamatsu A."/>
            <person name="Hayashi K."/>
            <person name="Sato H."/>
            <person name="Nagai K."/>
            <person name="Kimura K."/>
            <person name="Makita H."/>
            <person name="Sekine M."/>
            <person name="Obayashi M."/>
            <person name="Nishi T."/>
            <person name="Shibahara T."/>
            <person name="Tanaka T."/>
            <person name="Ishii S."/>
            <person name="Yamamoto J."/>
            <person name="Saito K."/>
            <person name="Kawai Y."/>
            <person name="Isono Y."/>
            <person name="Nakamura Y."/>
            <person name="Nagahari K."/>
            <person name="Murakami K."/>
            <person name="Yasuda T."/>
            <person name="Iwayanagi T."/>
            <person name="Wagatsuma M."/>
            <person name="Shiratori A."/>
            <person name="Sudo H."/>
            <person name="Hosoiri T."/>
            <person name="Kaku Y."/>
            <person name="Kodaira H."/>
            <person name="Kondo H."/>
            <person name="Sugawara M."/>
            <person name="Takahashi M."/>
            <person name="Kanda K."/>
            <person name="Yokoi T."/>
            <person name="Furuya T."/>
            <person name="Kikkawa E."/>
            <person name="Omura Y."/>
            <person name="Abe K."/>
            <person name="Kamihara K."/>
            <person name="Katsuta N."/>
            <person name="Sato K."/>
            <person name="Tanikawa M."/>
            <person name="Yamazaki M."/>
            <person name="Ninomiya K."/>
            <person name="Ishibashi T."/>
            <person name="Yamashita H."/>
            <person name="Murakawa K."/>
            <person name="Fujimori K."/>
            <person name="Tanai H."/>
            <person name="Kimata M."/>
            <person name="Watanabe M."/>
            <person name="Hiraoka S."/>
            <person name="Chiba Y."/>
            <person name="Ishida S."/>
            <person name="Ono Y."/>
            <person name="Takiguchi S."/>
            <person name="Watanabe S."/>
            <person name="Yosida M."/>
            <person name="Hotuta T."/>
            <person name="Kusano J."/>
            <person name="Kanehori K."/>
            <person name="Takahashi-Fujii A."/>
            <person name="Hara H."/>
            <person name="Tanase T.-O."/>
            <person name="Nomura Y."/>
            <person name="Togiya S."/>
            <person name="Komai F."/>
            <person name="Hara R."/>
            <person name="Takeuchi K."/>
            <person name="Arita M."/>
            <person name="Imose N."/>
            <person name="Musashino K."/>
            <person name="Yuuki H."/>
            <person name="Oshima A."/>
            <person name="Sasaki N."/>
            <person name="Aotsuka S."/>
            <person name="Yoshikawa Y."/>
            <person name="Matsunawa H."/>
            <person name="Ichihara T."/>
            <person name="Shiohata N."/>
            <person name="Sano S."/>
            <person name="Moriya S."/>
            <person name="Momiyama H."/>
            <person name="Satoh N."/>
            <person name="Takami S."/>
            <person name="Terashima Y."/>
            <person name="Suzuki O."/>
            <person name="Nakagawa S."/>
            <person name="Senoh A."/>
            <person name="Mizoguchi H."/>
            <person name="Goto Y."/>
            <person name="Shimizu F."/>
            <person name="Wakebe H."/>
            <person name="Hishigaki H."/>
            <person name="Watanabe T."/>
            <person name="Sugiyama A."/>
            <person name="Takemoto M."/>
            <person name="Kawakami B."/>
            <person name="Yamazaki M."/>
            <person name="Watanabe K."/>
            <person name="Kumagai A."/>
            <person name="Itakura S."/>
            <person name="Fukuzumi Y."/>
            <person name="Fujimori Y."/>
            <person name="Komiyama M."/>
            <person name="Tashiro H."/>
            <person name="Tanigami A."/>
            <person name="Fujiwara T."/>
            <person name="Ono T."/>
            <person name="Yamada K."/>
            <person name="Fujii Y."/>
            <person name="Ozaki K."/>
            <person name="Hirao M."/>
            <person name="Ohmori Y."/>
            <person name="Kawabata A."/>
            <person name="Hikiji T."/>
            <person name="Kobatake N."/>
            <person name="Inagaki H."/>
            <person name="Ikema Y."/>
            <person name="Okamoto S."/>
            <person name="Okitani R."/>
            <person name="Kawakami T."/>
            <person name="Noguchi S."/>
            <person name="Itoh T."/>
            <person name="Shigeta K."/>
            <person name="Senba T."/>
            <person name="Matsumura K."/>
            <person name="Nakajima Y."/>
            <person name="Mizuno T."/>
            <person name="Morinaga M."/>
            <person name="Sasaki M."/>
            <person name="Togashi T."/>
            <person name="Oyama M."/>
            <person name="Hata H."/>
            <person name="Watanabe M."/>
            <person name="Komatsu T."/>
            <person name="Mizushima-Sugano J."/>
            <person name="Satoh T."/>
            <person name="Shirai Y."/>
            <person name="Takahashi Y."/>
            <person name="Nakagawa K."/>
            <person name="Okumura K."/>
            <person name="Nagase T."/>
            <person name="Nomura N."/>
            <person name="Kikuchi H."/>
            <person name="Masuho Y."/>
            <person name="Yamashita R."/>
            <person name="Nakai K."/>
            <person name="Yada T."/>
            <person name="Nakamura Y."/>
            <person name="Ohara O."/>
            <person name="Isogai T."/>
            <person name="Sugano S."/>
        </authorList>
    </citation>
    <scope>NUCLEOTIDE SEQUENCE [LARGE SCALE MRNA]</scope>
    <source>
        <tissue>Heart</tissue>
    </source>
</reference>
<reference key="3">
    <citation type="journal article" date="2004" name="Genome Res.">
        <title>The status, quality, and expansion of the NIH full-length cDNA project: the Mammalian Gene Collection (MGC).</title>
        <authorList>
            <consortium name="The MGC Project Team"/>
        </authorList>
    </citation>
    <scope>NUCLEOTIDE SEQUENCE [LARGE SCALE MRNA]</scope>
    <source>
        <tissue>Pancreas</tissue>
    </source>
</reference>
<feature type="initiator methionine" description="Removed" evidence="1">
    <location>
        <position position="1"/>
    </location>
</feature>
<feature type="chain" id="PRO_0000198725" description="Myosin regulatory light chain 2, atrial isoform">
    <location>
        <begin position="2"/>
        <end position="175"/>
    </location>
</feature>
<feature type="domain" description="EF-hand 1" evidence="3">
    <location>
        <begin position="32"/>
        <end position="67"/>
    </location>
</feature>
<feature type="domain" description="EF-hand 2" evidence="3">
    <location>
        <begin position="102"/>
        <end position="137"/>
    </location>
</feature>
<feature type="domain" description="EF-hand 3" evidence="3">
    <location>
        <begin position="138"/>
        <end position="173"/>
    </location>
</feature>
<feature type="binding site" evidence="3">
    <location>
        <position position="45"/>
    </location>
    <ligand>
        <name>Ca(2+)</name>
        <dbReference type="ChEBI" id="CHEBI:29108"/>
    </ligand>
</feature>
<feature type="binding site" evidence="3">
    <location>
        <position position="47"/>
    </location>
    <ligand>
        <name>Ca(2+)</name>
        <dbReference type="ChEBI" id="CHEBI:29108"/>
    </ligand>
</feature>
<feature type="binding site" evidence="3">
    <location>
        <position position="49"/>
    </location>
    <ligand>
        <name>Ca(2+)</name>
        <dbReference type="ChEBI" id="CHEBI:29108"/>
    </ligand>
</feature>
<feature type="binding site" evidence="3">
    <location>
        <position position="56"/>
    </location>
    <ligand>
        <name>Ca(2+)</name>
        <dbReference type="ChEBI" id="CHEBI:29108"/>
    </ligand>
</feature>
<feature type="modified residue" description="N-acetylalanine" evidence="1">
    <location>
        <position position="2"/>
    </location>
</feature>
<feature type="modified residue" description="Phosphoserine" evidence="2">
    <location>
        <position position="22"/>
    </location>
</feature>
<feature type="modified residue" description="Phosphoserine" evidence="2">
    <location>
        <position position="23"/>
    </location>
</feature>
<proteinExistence type="evidence at protein level"/>
<sequence>MASRKAGTRGKVAATKQAQRGSSNVFSMFEQAQIQEFKEAFSCIDQNRDGIICKADLRETYSQLGKVSVPEEELDAMLQEGKGPINFTVFLTLFGEKLNGTDPEEAILSAFRMFDPSGKGVVNKDEFKQLLLTQADKFSPAEVEQMFALTPMDLAGNIDYKSLCYIITHGDEKEE</sequence>
<name>MLRA_HUMAN</name>
<protein>
    <recommendedName>
        <fullName>Myosin regulatory light chain 2, atrial isoform</fullName>
        <shortName>MLC-2a</shortName>
        <shortName>MLC2a</shortName>
        <shortName>Myosin light chain 2a</shortName>
    </recommendedName>
    <alternativeName>
        <fullName>Myosin regulatory light chain 7</fullName>
    </alternativeName>
</protein>
<keyword id="KW-0007">Acetylation</keyword>
<keyword id="KW-0106">Calcium</keyword>
<keyword id="KW-0479">Metal-binding</keyword>
<keyword id="KW-0505">Motor protein</keyword>
<keyword id="KW-0514">Muscle protein</keyword>
<keyword id="KW-0518">Myosin</keyword>
<keyword id="KW-0597">Phosphoprotein</keyword>
<keyword id="KW-1267">Proteomics identification</keyword>
<keyword id="KW-1185">Reference proteome</keyword>
<keyword id="KW-0677">Repeat</keyword>
<dbReference type="EMBL" id="M94547">
    <property type="protein sequence ID" value="AAA59889.1"/>
    <property type="molecule type" value="mRNA"/>
</dbReference>
<dbReference type="EMBL" id="AK311869">
    <property type="protein sequence ID" value="BAG34810.1"/>
    <property type="molecule type" value="mRNA"/>
</dbReference>
<dbReference type="EMBL" id="BC027915">
    <property type="protein sequence ID" value="AAH27915.1"/>
    <property type="molecule type" value="mRNA"/>
</dbReference>
<dbReference type="CCDS" id="CCDS5478.1"/>
<dbReference type="PIR" id="A44451">
    <property type="entry name" value="A44451"/>
</dbReference>
<dbReference type="RefSeq" id="NP_067046.1">
    <property type="nucleotide sequence ID" value="NM_021223.3"/>
</dbReference>
<dbReference type="SMR" id="Q01449"/>
<dbReference type="BioGRID" id="121828">
    <property type="interactions" value="10"/>
</dbReference>
<dbReference type="FunCoup" id="Q01449">
    <property type="interactions" value="336"/>
</dbReference>
<dbReference type="IntAct" id="Q01449">
    <property type="interactions" value="7"/>
</dbReference>
<dbReference type="STRING" id="9606.ENSP00000223364"/>
<dbReference type="ChEMBL" id="CHEMBL3831286"/>
<dbReference type="iPTMnet" id="Q01449"/>
<dbReference type="PhosphoSitePlus" id="Q01449"/>
<dbReference type="BioMuta" id="MYL7"/>
<dbReference type="DMDM" id="38604716"/>
<dbReference type="jPOST" id="Q01449"/>
<dbReference type="MassIVE" id="Q01449"/>
<dbReference type="PaxDb" id="9606-ENSP00000223364"/>
<dbReference type="PeptideAtlas" id="Q01449"/>
<dbReference type="ProteomicsDB" id="57954"/>
<dbReference type="Antibodypedia" id="2833">
    <property type="antibodies" value="296 antibodies from 29 providers"/>
</dbReference>
<dbReference type="DNASU" id="58498"/>
<dbReference type="Ensembl" id="ENST00000223364.7">
    <property type="protein sequence ID" value="ENSP00000223364.3"/>
    <property type="gene ID" value="ENSG00000106631.8"/>
</dbReference>
<dbReference type="GeneID" id="58498"/>
<dbReference type="KEGG" id="hsa:58498"/>
<dbReference type="MANE-Select" id="ENST00000223364.7">
    <property type="protein sequence ID" value="ENSP00000223364.3"/>
    <property type="RefSeq nucleotide sequence ID" value="NM_021223.3"/>
    <property type="RefSeq protein sequence ID" value="NP_067046.1"/>
</dbReference>
<dbReference type="UCSC" id="uc003tkg.4">
    <property type="organism name" value="human"/>
</dbReference>
<dbReference type="AGR" id="HGNC:21719"/>
<dbReference type="CTD" id="58498"/>
<dbReference type="DisGeNET" id="58498"/>
<dbReference type="GeneCards" id="MYL7"/>
<dbReference type="HGNC" id="HGNC:21719">
    <property type="gene designation" value="MYL7"/>
</dbReference>
<dbReference type="HPA" id="ENSG00000106631">
    <property type="expression patterns" value="Tissue enriched (heart)"/>
</dbReference>
<dbReference type="MIM" id="613993">
    <property type="type" value="gene"/>
</dbReference>
<dbReference type="neXtProt" id="NX_Q01449"/>
<dbReference type="OpenTargets" id="ENSG00000106631"/>
<dbReference type="PharmGKB" id="PA134939476"/>
<dbReference type="VEuPathDB" id="HostDB:ENSG00000106631"/>
<dbReference type="eggNOG" id="KOG0031">
    <property type="taxonomic scope" value="Eukaryota"/>
</dbReference>
<dbReference type="GeneTree" id="ENSGT00940000161682"/>
<dbReference type="InParanoid" id="Q01449"/>
<dbReference type="OMA" id="ALTHWGQ"/>
<dbReference type="OrthoDB" id="429467at2759"/>
<dbReference type="PAN-GO" id="Q01449">
    <property type="GO annotations" value="5 GO annotations based on evolutionary models"/>
</dbReference>
<dbReference type="PhylomeDB" id="Q01449"/>
<dbReference type="TreeFam" id="TF314218"/>
<dbReference type="PathwayCommons" id="Q01449"/>
<dbReference type="Reactome" id="R-HSA-445355">
    <property type="pathway name" value="Smooth Muscle Contraction"/>
</dbReference>
<dbReference type="SignaLink" id="Q01449"/>
<dbReference type="BioGRID-ORCS" id="58498">
    <property type="hits" value="16 hits in 1147 CRISPR screens"/>
</dbReference>
<dbReference type="ChiTaRS" id="MYL7">
    <property type="organism name" value="human"/>
</dbReference>
<dbReference type="GeneWiki" id="MYL7"/>
<dbReference type="GenomeRNAi" id="58498"/>
<dbReference type="Pharos" id="Q01449">
    <property type="development level" value="Tbio"/>
</dbReference>
<dbReference type="PRO" id="PR:Q01449"/>
<dbReference type="Proteomes" id="UP000005640">
    <property type="component" value="Chromosome 7"/>
</dbReference>
<dbReference type="RNAct" id="Q01449">
    <property type="molecule type" value="protein"/>
</dbReference>
<dbReference type="Bgee" id="ENSG00000106631">
    <property type="expression patterns" value="Expressed in cardiac muscle of right atrium and 98 other cell types or tissues"/>
</dbReference>
<dbReference type="ExpressionAtlas" id="Q01449">
    <property type="expression patterns" value="baseline and differential"/>
</dbReference>
<dbReference type="GO" id="GO:0031672">
    <property type="term" value="C:A band"/>
    <property type="evidence" value="ECO:0000314"/>
    <property type="project" value="BHF-UCL"/>
</dbReference>
<dbReference type="GO" id="GO:0005737">
    <property type="term" value="C:cytoplasm"/>
    <property type="evidence" value="ECO:0000318"/>
    <property type="project" value="GO_Central"/>
</dbReference>
<dbReference type="GO" id="GO:0005829">
    <property type="term" value="C:cytosol"/>
    <property type="evidence" value="ECO:0000304"/>
    <property type="project" value="Reactome"/>
</dbReference>
<dbReference type="GO" id="GO:0043197">
    <property type="term" value="C:dendritic spine"/>
    <property type="evidence" value="ECO:0007669"/>
    <property type="project" value="Ensembl"/>
</dbReference>
<dbReference type="GO" id="GO:0030016">
    <property type="term" value="C:myofibril"/>
    <property type="evidence" value="ECO:0000318"/>
    <property type="project" value="GO_Central"/>
</dbReference>
<dbReference type="GO" id="GO:0016459">
    <property type="term" value="C:myosin complex"/>
    <property type="evidence" value="ECO:0000303"/>
    <property type="project" value="UniProtKB"/>
</dbReference>
<dbReference type="GO" id="GO:0005509">
    <property type="term" value="F:calcium ion binding"/>
    <property type="evidence" value="ECO:0000318"/>
    <property type="project" value="GO_Central"/>
</dbReference>
<dbReference type="GO" id="GO:0048738">
    <property type="term" value="P:cardiac muscle tissue development"/>
    <property type="evidence" value="ECO:0000318"/>
    <property type="project" value="GO_Central"/>
</dbReference>
<dbReference type="GO" id="GO:0060047">
    <property type="term" value="P:heart contraction"/>
    <property type="evidence" value="ECO:0000318"/>
    <property type="project" value="GO_Central"/>
</dbReference>
<dbReference type="FunFam" id="1.10.238.10:FF:000010">
    <property type="entry name" value="Myosin regulatory light chain 2, atrial isoform"/>
    <property type="match status" value="1"/>
</dbReference>
<dbReference type="FunFam" id="1.10.238.10:FF:000007">
    <property type="entry name" value="Putative myosin regulatory light chain sqh"/>
    <property type="match status" value="1"/>
</dbReference>
<dbReference type="Gene3D" id="1.10.238.10">
    <property type="entry name" value="EF-hand"/>
    <property type="match status" value="2"/>
</dbReference>
<dbReference type="InterPro" id="IPR011992">
    <property type="entry name" value="EF-hand-dom_pair"/>
</dbReference>
<dbReference type="InterPro" id="IPR018247">
    <property type="entry name" value="EF_Hand_1_Ca_BS"/>
</dbReference>
<dbReference type="InterPro" id="IPR002048">
    <property type="entry name" value="EF_hand_dom"/>
</dbReference>
<dbReference type="InterPro" id="IPR050403">
    <property type="entry name" value="Myosin_RLC"/>
</dbReference>
<dbReference type="PANTHER" id="PTHR23049">
    <property type="entry name" value="MYOSIN REGULATORY LIGHT CHAIN 2"/>
    <property type="match status" value="1"/>
</dbReference>
<dbReference type="Pfam" id="PF13202">
    <property type="entry name" value="EF-hand_5"/>
    <property type="match status" value="1"/>
</dbReference>
<dbReference type="Pfam" id="PF13833">
    <property type="entry name" value="EF-hand_8"/>
    <property type="match status" value="1"/>
</dbReference>
<dbReference type="SMART" id="SM00054">
    <property type="entry name" value="EFh"/>
    <property type="match status" value="2"/>
</dbReference>
<dbReference type="SUPFAM" id="SSF47473">
    <property type="entry name" value="EF-hand"/>
    <property type="match status" value="1"/>
</dbReference>
<dbReference type="PROSITE" id="PS00018">
    <property type="entry name" value="EF_HAND_1"/>
    <property type="match status" value="1"/>
</dbReference>
<dbReference type="PROSITE" id="PS50222">
    <property type="entry name" value="EF_HAND_2"/>
    <property type="match status" value="3"/>
</dbReference>
<organism>
    <name type="scientific">Homo sapiens</name>
    <name type="common">Human</name>
    <dbReference type="NCBI Taxonomy" id="9606"/>
    <lineage>
        <taxon>Eukaryota</taxon>
        <taxon>Metazoa</taxon>
        <taxon>Chordata</taxon>
        <taxon>Craniata</taxon>
        <taxon>Vertebrata</taxon>
        <taxon>Euteleostomi</taxon>
        <taxon>Mammalia</taxon>
        <taxon>Eutheria</taxon>
        <taxon>Euarchontoglires</taxon>
        <taxon>Primates</taxon>
        <taxon>Haplorrhini</taxon>
        <taxon>Catarrhini</taxon>
        <taxon>Hominidae</taxon>
        <taxon>Homo</taxon>
    </lineage>
</organism>